<name>ALBA_STRNR</name>
<proteinExistence type="evidence at protein level"/>
<accession>Q8GED9</accession>
<protein>
    <recommendedName>
        <fullName>Albonoursin synthase</fullName>
        <ecNumber>1.3.3.13</ecNumber>
    </recommendedName>
    <alternativeName>
        <fullName>Albonoursin synthase protein A</fullName>
    </alternativeName>
    <alternativeName>
        <fullName>Cyclic dipeptide oxidase</fullName>
        <shortName>CDO</shortName>
    </alternativeName>
</protein>
<sequence length="219" mass="23763">MRRHPSHSPYRGGCEVRPKRRGLMLAHSSSESPPESLPDAWTVLKTRTAVRNYAKEPVDDALIEQLLEAMLAAPTASNRQAWSFMVVRRPAAVRRLRAFSPGVLGTPAFFVVACVDRSLTDNLSPKLSQKIYDTSKLCVAMAVENLLLAAHAAGLGGCPVGSFRSDIVTSMLGIPEHIEPMLVVPIGRPATALVPSQRRAKNEVVNYESWGNRAAAPTA</sequence>
<comment type="function">
    <text evidence="1 2">Involved in the biosynthesis of albonoursin (cyclo[(alpha,beta-dehydro-Phe)-(alpha,beta-dehydro-Leu)]), an antibacterial peptide. Catalyzes the formation of alpha,beta-dehydro-Phe (DPhe) and alpha,beta-dehydro-Leu (DLeu) residues during the biosynthesis of albonoursin. The catalytic reaction of cyclo(L-Phe-L-Leu) occurs in a two-step sequential alpha-beta-dehydrogenation leading first to cyclo(alpha,beta-dehydro-Phe-L-Leu) and finally to albonoursin. Can also use cyclo(L-Phe-L-His), cyclo(L-Trp-L-Trp), cyclo(L-Leu-L-Ala), cyclo(L-Phe-Gly), cyclo(L-Leu-Gly), cyclo(L-Ser-Gly) and cyclo(L-Glu-Gly) as substrate suggesting that the diketopiperazine ring is essential for the enzymatic reaction.</text>
</comment>
<comment type="catalytic activity">
    <reaction evidence="1">
        <text>cyclo(L-phenylalanyl-L-leucyl) + 2 O2 = albonoursin + 2 H2O2</text>
        <dbReference type="Rhea" id="RHEA:35531"/>
        <dbReference type="ChEBI" id="CHEBI:15379"/>
        <dbReference type="ChEBI" id="CHEBI:16240"/>
        <dbReference type="ChEBI" id="CHEBI:71608"/>
        <dbReference type="ChEBI" id="CHEBI:71609"/>
        <dbReference type="EC" id="1.3.3.13"/>
    </reaction>
</comment>
<comment type="cofactor">
    <cofactor evidence="4">
        <name>FMN</name>
        <dbReference type="ChEBI" id="CHEBI:58210"/>
    </cofactor>
</comment>
<comment type="biophysicochemical properties">
    <kinetics>
        <KM evidence="1">53 uM for cyclo(L-Phe-L-Leu) (at pH 8 and 30 degrees Celsius)</KM>
        <KM evidence="1">67 uM for cyclo(L-Phe-L-His) (at pH 8 and 30 degrees Celsius)</KM>
        <text>kcat is 0.453 and 0.69 sec(-1) for cyclo(L-Phe-L-His) and cyclo(L-Phe-L-Leu), respectively.</text>
    </kinetics>
    <phDependence>
        <text evidence="1">Optimum pH is 8.</text>
    </phDependence>
    <temperatureDependence>
        <text evidence="1">Optimum temperature is 60 degrees Celsius. The activity increases quite linearly with temperature and is nearly twice as high at 60 degrees Celsius as compared to 30 degrees Celsius. Above 60 degrees Celsius, the enzyme activity dramatically decreases, probably due to thermal inactivation.</text>
    </temperatureDependence>
</comment>
<comment type="subunit">
    <text>Homomer.</text>
</comment>
<comment type="subcellular location">
    <subcellularLocation>
        <location evidence="4">Cytoplasm</location>
    </subcellularLocation>
</comment>
<comment type="PTM">
    <text>The N-terminus is blocked.</text>
</comment>
<comment type="similarity">
    <text evidence="3">Belongs to the nitroreductase family.</text>
</comment>
<feature type="chain" id="PRO_0000423357" description="Albonoursin synthase">
    <location>
        <begin position="1"/>
        <end position="219"/>
    </location>
</feature>
<feature type="helix" evidence="5">
    <location>
        <begin position="40"/>
        <end position="46"/>
    </location>
</feature>
<feature type="helix" evidence="5">
    <location>
        <begin position="60"/>
        <end position="70"/>
    </location>
</feature>
<feature type="helix" evidence="5">
    <location>
        <begin position="76"/>
        <end position="78"/>
    </location>
</feature>
<feature type="strand" evidence="5">
    <location>
        <begin position="82"/>
        <end position="87"/>
    </location>
</feature>
<feature type="helix" evidence="5">
    <location>
        <begin position="90"/>
        <end position="98"/>
    </location>
</feature>
<feature type="strand" evidence="5">
    <location>
        <begin position="108"/>
        <end position="116"/>
    </location>
</feature>
<feature type="helix" evidence="5">
    <location>
        <begin position="117"/>
        <end position="119"/>
    </location>
</feature>
<feature type="helix" evidence="5">
    <location>
        <begin position="125"/>
        <end position="152"/>
    </location>
</feature>
<feature type="helix" evidence="5">
    <location>
        <begin position="165"/>
        <end position="172"/>
    </location>
</feature>
<feature type="strand" evidence="5">
    <location>
        <begin position="178"/>
        <end position="187"/>
    </location>
</feature>
<feature type="strand" evidence="5">
    <location>
        <begin position="189"/>
        <end position="191"/>
    </location>
</feature>
<feature type="helix" evidence="5">
    <location>
        <begin position="201"/>
        <end position="204"/>
    </location>
</feature>
<feature type="strand" evidence="5">
    <location>
        <begin position="205"/>
        <end position="209"/>
    </location>
</feature>
<dbReference type="EC" id="1.3.3.13"/>
<dbReference type="EMBL" id="AY129235">
    <property type="protein sequence ID" value="AAN07907.1"/>
    <property type="molecule type" value="Genomic_DNA"/>
</dbReference>
<dbReference type="PDB" id="8UC3">
    <property type="method" value="EM"/>
    <property type="resolution" value="2.78 A"/>
    <property type="chains" value="A/B=24-219"/>
</dbReference>
<dbReference type="PDBsum" id="8UC3"/>
<dbReference type="EMDB" id="EMD-42114"/>
<dbReference type="SMR" id="Q8GED9"/>
<dbReference type="KEGG" id="ag:AAN07907"/>
<dbReference type="BRENDA" id="1.3.3.13">
    <property type="organism ID" value="11755"/>
</dbReference>
<dbReference type="GO" id="GO:0005737">
    <property type="term" value="C:cytoplasm"/>
    <property type="evidence" value="ECO:0007669"/>
    <property type="project" value="UniProtKB-SubCell"/>
</dbReference>
<dbReference type="GO" id="GO:0016634">
    <property type="term" value="F:oxidoreductase activity, acting on the CH-CH group of donors, oxygen as acceptor"/>
    <property type="evidence" value="ECO:0000314"/>
    <property type="project" value="UniProtKB"/>
</dbReference>
<dbReference type="CDD" id="cd02062">
    <property type="entry name" value="Nitro_FMN_reductase"/>
    <property type="match status" value="1"/>
</dbReference>
<dbReference type="FunFam" id="3.40.109.10:FF:000040">
    <property type="entry name" value="Albonoursin synthase"/>
    <property type="match status" value="1"/>
</dbReference>
<dbReference type="Gene3D" id="3.40.109.10">
    <property type="entry name" value="NADH Oxidase"/>
    <property type="match status" value="1"/>
</dbReference>
<dbReference type="InterPro" id="IPR029479">
    <property type="entry name" value="Nitroreductase"/>
</dbReference>
<dbReference type="InterPro" id="IPR000415">
    <property type="entry name" value="Nitroreductase-like"/>
</dbReference>
<dbReference type="PANTHER" id="PTHR43673">
    <property type="entry name" value="NAD(P)H NITROREDUCTASE YDGI-RELATED"/>
    <property type="match status" value="1"/>
</dbReference>
<dbReference type="PANTHER" id="PTHR43673:SF2">
    <property type="entry name" value="NITROREDUCTASE"/>
    <property type="match status" value="1"/>
</dbReference>
<dbReference type="Pfam" id="PF00881">
    <property type="entry name" value="Nitroreductase"/>
    <property type="match status" value="2"/>
</dbReference>
<dbReference type="SUPFAM" id="SSF55469">
    <property type="entry name" value="FMN-dependent nitroreductase-like"/>
    <property type="match status" value="1"/>
</dbReference>
<reference key="1">
    <citation type="journal article" date="2002" name="Chem. Biol.">
        <title>The albonoursin gene cluster of S noursei biosynthesis of diketopiperazine metabolites independent of nonribosomal peptide synthetases.</title>
        <authorList>
            <person name="Lautru S."/>
            <person name="Gondry M."/>
            <person name="Genet R."/>
            <person name="Pernodet J.L."/>
        </authorList>
    </citation>
    <scope>NUCLEOTIDE SEQUENCE [GENOMIC DNA]</scope>
    <scope>FUNCTION</scope>
    <scope>NOMENCLATURE</scope>
    <source>
        <strain>ATCC 11455 / DSM 40635 / JCM 4922 / KCC S-0922 / NBRC 15452 / NCIMB 8593 / NRRL B-1714 / 48240</strain>
    </source>
</reference>
<reference key="2">
    <citation type="journal article" date="2001" name="Eur. J. Biochem.">
        <title>Cyclic dipeptide oxidase from Streptomyces noursei. Isolation, purification and partial characterization of a novel, amino acyl alpha,beta-dehydrogenase.</title>
        <authorList>
            <person name="Gondry M."/>
            <person name="Lautru S."/>
            <person name="Fusai G."/>
            <person name="Meunier G."/>
            <person name="Menez A."/>
            <person name="Genet R."/>
        </authorList>
    </citation>
    <scope>FUNCTION</scope>
    <scope>CATALYTIC ACTIVITY</scope>
    <scope>BIOPHYSICOCHEMICAL PROPERTIES</scope>
    <scope>BLOCKAGE OF N-TERMINUS</scope>
    <scope>SUBCELLULAR LOCATION</scope>
    <scope>COFACTOR</scope>
    <scope>SUBSTRATE SPECIFICITY</scope>
    <source>
        <strain>ATCC 11455 / DSM 40635 / JCM 4922 / KCC S-0922 / NBRC 15452 / NCIMB 8593 / NRRL B-1714 / 48240</strain>
    </source>
</reference>
<organism>
    <name type="scientific">Streptomyces noursei</name>
    <name type="common">Streptomyces albulus</name>
    <dbReference type="NCBI Taxonomy" id="1971"/>
    <lineage>
        <taxon>Bacteria</taxon>
        <taxon>Bacillati</taxon>
        <taxon>Actinomycetota</taxon>
        <taxon>Actinomycetes</taxon>
        <taxon>Kitasatosporales</taxon>
        <taxon>Streptomycetaceae</taxon>
        <taxon>Streptomyces</taxon>
    </lineage>
</organism>
<keyword id="KW-0002">3D-structure</keyword>
<keyword id="KW-0963">Cytoplasm</keyword>
<keyword id="KW-0285">Flavoprotein</keyword>
<keyword id="KW-0288">FMN</keyword>
<keyword id="KW-0560">Oxidoreductase</keyword>
<gene>
    <name type="primary">albA</name>
</gene>
<evidence type="ECO:0000269" key="1">
    <source>
    </source>
</evidence>
<evidence type="ECO:0000269" key="2">
    <source>
    </source>
</evidence>
<evidence type="ECO:0000305" key="3"/>
<evidence type="ECO:0000305" key="4">
    <source>
    </source>
</evidence>
<evidence type="ECO:0007829" key="5">
    <source>
        <dbReference type="PDB" id="8UC3"/>
    </source>
</evidence>